<proteinExistence type="evidence at transcript level"/>
<dbReference type="EC" id="2.3.1.-" evidence="5"/>
<dbReference type="EMBL" id="KV878980">
    <property type="protein sequence ID" value="OJJ98486.1"/>
    <property type="molecule type" value="Genomic_DNA"/>
</dbReference>
<dbReference type="RefSeq" id="XP_020054826.1">
    <property type="nucleotide sequence ID" value="XM_020202047.1"/>
</dbReference>
<dbReference type="SMR" id="A0A1L9WQM9"/>
<dbReference type="STRING" id="690307.A0A1L9WQM9"/>
<dbReference type="GeneID" id="30975861"/>
<dbReference type="VEuPathDB" id="FungiDB:ASPACDRAFT_48"/>
<dbReference type="OMA" id="RGKMMAV"/>
<dbReference type="OrthoDB" id="329835at2759"/>
<dbReference type="Proteomes" id="UP000184546">
    <property type="component" value="Unassembled WGS sequence"/>
</dbReference>
<dbReference type="GO" id="GO:0004315">
    <property type="term" value="F:3-oxoacyl-[acyl-carrier-protein] synthase activity"/>
    <property type="evidence" value="ECO:0007669"/>
    <property type="project" value="InterPro"/>
</dbReference>
<dbReference type="GO" id="GO:0004312">
    <property type="term" value="F:fatty acid synthase activity"/>
    <property type="evidence" value="ECO:0007669"/>
    <property type="project" value="TreeGrafter"/>
</dbReference>
<dbReference type="GO" id="GO:0008168">
    <property type="term" value="F:methyltransferase activity"/>
    <property type="evidence" value="ECO:0007669"/>
    <property type="project" value="UniProtKB-KW"/>
</dbReference>
<dbReference type="GO" id="GO:0016491">
    <property type="term" value="F:oxidoreductase activity"/>
    <property type="evidence" value="ECO:0007669"/>
    <property type="project" value="UniProtKB-KW"/>
</dbReference>
<dbReference type="GO" id="GO:0031177">
    <property type="term" value="F:phosphopantetheine binding"/>
    <property type="evidence" value="ECO:0007669"/>
    <property type="project" value="InterPro"/>
</dbReference>
<dbReference type="GO" id="GO:0006633">
    <property type="term" value="P:fatty acid biosynthetic process"/>
    <property type="evidence" value="ECO:0007669"/>
    <property type="project" value="InterPro"/>
</dbReference>
<dbReference type="GO" id="GO:0032259">
    <property type="term" value="P:methylation"/>
    <property type="evidence" value="ECO:0007669"/>
    <property type="project" value="UniProtKB-KW"/>
</dbReference>
<dbReference type="GO" id="GO:0044550">
    <property type="term" value="P:secondary metabolite biosynthetic process"/>
    <property type="evidence" value="ECO:0007669"/>
    <property type="project" value="TreeGrafter"/>
</dbReference>
<dbReference type="CDD" id="cd00833">
    <property type="entry name" value="PKS"/>
    <property type="match status" value="1"/>
</dbReference>
<dbReference type="FunFam" id="3.40.47.10:FF:000019">
    <property type="entry name" value="Polyketide synthase type I"/>
    <property type="match status" value="1"/>
</dbReference>
<dbReference type="Gene3D" id="3.40.47.10">
    <property type="match status" value="1"/>
</dbReference>
<dbReference type="Gene3D" id="1.10.1200.10">
    <property type="entry name" value="ACP-like"/>
    <property type="match status" value="1"/>
</dbReference>
<dbReference type="Gene3D" id="3.40.366.10">
    <property type="entry name" value="Malonyl-Coenzyme A Acyl Carrier Protein, domain 2"/>
    <property type="match status" value="1"/>
</dbReference>
<dbReference type="Gene3D" id="3.40.50.720">
    <property type="entry name" value="NAD(P)-binding Rossmann-like Domain"/>
    <property type="match status" value="2"/>
</dbReference>
<dbReference type="Gene3D" id="3.10.129.110">
    <property type="entry name" value="Polyketide synthase dehydratase"/>
    <property type="match status" value="1"/>
</dbReference>
<dbReference type="Gene3D" id="3.40.50.150">
    <property type="entry name" value="Vaccinia Virus protein VP39"/>
    <property type="match status" value="1"/>
</dbReference>
<dbReference type="InterPro" id="IPR001227">
    <property type="entry name" value="Ac_transferase_dom_sf"/>
</dbReference>
<dbReference type="InterPro" id="IPR036736">
    <property type="entry name" value="ACP-like_sf"/>
</dbReference>
<dbReference type="InterPro" id="IPR014043">
    <property type="entry name" value="Acyl_transferase_dom"/>
</dbReference>
<dbReference type="InterPro" id="IPR016035">
    <property type="entry name" value="Acyl_Trfase/lysoPLipase"/>
</dbReference>
<dbReference type="InterPro" id="IPR018201">
    <property type="entry name" value="Ketoacyl_synth_AS"/>
</dbReference>
<dbReference type="InterPro" id="IPR014031">
    <property type="entry name" value="Ketoacyl_synth_C"/>
</dbReference>
<dbReference type="InterPro" id="IPR014030">
    <property type="entry name" value="Ketoacyl_synth_N"/>
</dbReference>
<dbReference type="InterPro" id="IPR016036">
    <property type="entry name" value="Malonyl_transacylase_ACP-bd"/>
</dbReference>
<dbReference type="InterPro" id="IPR013217">
    <property type="entry name" value="Methyltransf_12"/>
</dbReference>
<dbReference type="InterPro" id="IPR036291">
    <property type="entry name" value="NAD(P)-bd_dom_sf"/>
</dbReference>
<dbReference type="InterPro" id="IPR032821">
    <property type="entry name" value="PKS_assoc"/>
</dbReference>
<dbReference type="InterPro" id="IPR020841">
    <property type="entry name" value="PKS_Beta-ketoAc_synthase_dom"/>
</dbReference>
<dbReference type="InterPro" id="IPR042104">
    <property type="entry name" value="PKS_dehydratase_sf"/>
</dbReference>
<dbReference type="InterPro" id="IPR020807">
    <property type="entry name" value="PKS_DH"/>
</dbReference>
<dbReference type="InterPro" id="IPR049551">
    <property type="entry name" value="PKS_DH_C"/>
</dbReference>
<dbReference type="InterPro" id="IPR049552">
    <property type="entry name" value="PKS_DH_N"/>
</dbReference>
<dbReference type="InterPro" id="IPR013968">
    <property type="entry name" value="PKS_KR"/>
</dbReference>
<dbReference type="InterPro" id="IPR049900">
    <property type="entry name" value="PKS_mFAS_DH"/>
</dbReference>
<dbReference type="InterPro" id="IPR050091">
    <property type="entry name" value="PKS_NRPS_Biosynth_Enz"/>
</dbReference>
<dbReference type="InterPro" id="IPR020806">
    <property type="entry name" value="PKS_PP-bd"/>
</dbReference>
<dbReference type="InterPro" id="IPR009081">
    <property type="entry name" value="PP-bd_ACP"/>
</dbReference>
<dbReference type="InterPro" id="IPR029063">
    <property type="entry name" value="SAM-dependent_MTases_sf"/>
</dbReference>
<dbReference type="InterPro" id="IPR016039">
    <property type="entry name" value="Thiolase-like"/>
</dbReference>
<dbReference type="PANTHER" id="PTHR43775">
    <property type="entry name" value="FATTY ACID SYNTHASE"/>
    <property type="match status" value="1"/>
</dbReference>
<dbReference type="PANTHER" id="PTHR43775:SF20">
    <property type="entry name" value="HYBRID PKS-NRPS SYNTHETASE APDA"/>
    <property type="match status" value="1"/>
</dbReference>
<dbReference type="Pfam" id="PF00698">
    <property type="entry name" value="Acyl_transf_1"/>
    <property type="match status" value="1"/>
</dbReference>
<dbReference type="Pfam" id="PF16197">
    <property type="entry name" value="KAsynt_C_assoc"/>
    <property type="match status" value="1"/>
</dbReference>
<dbReference type="Pfam" id="PF00109">
    <property type="entry name" value="ketoacyl-synt"/>
    <property type="match status" value="1"/>
</dbReference>
<dbReference type="Pfam" id="PF02801">
    <property type="entry name" value="Ketoacyl-synt_C"/>
    <property type="match status" value="1"/>
</dbReference>
<dbReference type="Pfam" id="PF08659">
    <property type="entry name" value="KR"/>
    <property type="match status" value="1"/>
</dbReference>
<dbReference type="Pfam" id="PF08242">
    <property type="entry name" value="Methyltransf_12"/>
    <property type="match status" value="1"/>
</dbReference>
<dbReference type="Pfam" id="PF21089">
    <property type="entry name" value="PKS_DH_N"/>
    <property type="match status" value="1"/>
</dbReference>
<dbReference type="Pfam" id="PF00550">
    <property type="entry name" value="PP-binding"/>
    <property type="match status" value="1"/>
</dbReference>
<dbReference type="Pfam" id="PF14765">
    <property type="entry name" value="PS-DH"/>
    <property type="match status" value="1"/>
</dbReference>
<dbReference type="SMART" id="SM00827">
    <property type="entry name" value="PKS_AT"/>
    <property type="match status" value="1"/>
</dbReference>
<dbReference type="SMART" id="SM00826">
    <property type="entry name" value="PKS_DH"/>
    <property type="match status" value="1"/>
</dbReference>
<dbReference type="SMART" id="SM00822">
    <property type="entry name" value="PKS_KR"/>
    <property type="match status" value="1"/>
</dbReference>
<dbReference type="SMART" id="SM00825">
    <property type="entry name" value="PKS_KS"/>
    <property type="match status" value="1"/>
</dbReference>
<dbReference type="SMART" id="SM00823">
    <property type="entry name" value="PKS_PP"/>
    <property type="match status" value="1"/>
</dbReference>
<dbReference type="SUPFAM" id="SSF47336">
    <property type="entry name" value="ACP-like"/>
    <property type="match status" value="1"/>
</dbReference>
<dbReference type="SUPFAM" id="SSF52151">
    <property type="entry name" value="FabD/lysophospholipase-like"/>
    <property type="match status" value="1"/>
</dbReference>
<dbReference type="SUPFAM" id="SSF51735">
    <property type="entry name" value="NAD(P)-binding Rossmann-fold domains"/>
    <property type="match status" value="2"/>
</dbReference>
<dbReference type="SUPFAM" id="SSF55048">
    <property type="entry name" value="Probable ACP-binding domain of malonyl-CoA ACP transacylase"/>
    <property type="match status" value="1"/>
</dbReference>
<dbReference type="SUPFAM" id="SSF53335">
    <property type="entry name" value="S-adenosyl-L-methionine-dependent methyltransferases"/>
    <property type="match status" value="1"/>
</dbReference>
<dbReference type="SUPFAM" id="SSF53901">
    <property type="entry name" value="Thiolase-like"/>
    <property type="match status" value="1"/>
</dbReference>
<dbReference type="PROSITE" id="PS50075">
    <property type="entry name" value="CARRIER"/>
    <property type="match status" value="1"/>
</dbReference>
<dbReference type="PROSITE" id="PS00606">
    <property type="entry name" value="KS3_1"/>
    <property type="match status" value="1"/>
</dbReference>
<dbReference type="PROSITE" id="PS52004">
    <property type="entry name" value="KS3_2"/>
    <property type="match status" value="1"/>
</dbReference>
<dbReference type="PROSITE" id="PS52019">
    <property type="entry name" value="PKS_MFAS_DH"/>
    <property type="match status" value="1"/>
</dbReference>
<evidence type="ECO:0000255" key="1"/>
<evidence type="ECO:0000255" key="2">
    <source>
        <dbReference type="PROSITE-ProRule" id="PRU00258"/>
    </source>
</evidence>
<evidence type="ECO:0000255" key="3">
    <source>
        <dbReference type="PROSITE-ProRule" id="PRU01348"/>
    </source>
</evidence>
<evidence type="ECO:0000255" key="4">
    <source>
        <dbReference type="PROSITE-ProRule" id="PRU01363"/>
    </source>
</evidence>
<evidence type="ECO:0000269" key="5">
    <source>
    </source>
</evidence>
<evidence type="ECO:0000303" key="6">
    <source>
    </source>
</evidence>
<evidence type="ECO:0000305" key="7">
    <source>
    </source>
</evidence>
<organism>
    <name type="scientific">Aspergillus aculeatus (strain ATCC 16872 / CBS 172.66 / WB 5094)</name>
    <dbReference type="NCBI Taxonomy" id="690307"/>
    <lineage>
        <taxon>Eukaryota</taxon>
        <taxon>Fungi</taxon>
        <taxon>Dikarya</taxon>
        <taxon>Ascomycota</taxon>
        <taxon>Pezizomycotina</taxon>
        <taxon>Eurotiomycetes</taxon>
        <taxon>Eurotiomycetidae</taxon>
        <taxon>Eurotiales</taxon>
        <taxon>Aspergillaceae</taxon>
        <taxon>Aspergillus</taxon>
        <taxon>Aspergillus subgen. Circumdati</taxon>
    </lineage>
</organism>
<name>ACRA_ASPA1</name>
<reference key="1">
    <citation type="journal article" date="2017" name="Genome Biol.">
        <title>Comparative genomics reveals high biological diversity and specific adaptations in the industrially and medically important fungal genus Aspergillus.</title>
        <authorList>
            <person name="de Vries R.P."/>
            <person name="Riley R."/>
            <person name="Wiebenga A."/>
            <person name="Aguilar-Osorio G."/>
            <person name="Amillis S."/>
            <person name="Uchima C.A."/>
            <person name="Anderluh G."/>
            <person name="Asadollahi M."/>
            <person name="Askin M."/>
            <person name="Barry K."/>
            <person name="Battaglia E."/>
            <person name="Bayram O."/>
            <person name="Benocci T."/>
            <person name="Braus-Stromeyer S.A."/>
            <person name="Caldana C."/>
            <person name="Canovas D."/>
            <person name="Cerqueira G.C."/>
            <person name="Chen F."/>
            <person name="Chen W."/>
            <person name="Choi C."/>
            <person name="Clum A."/>
            <person name="Dos Santos R.A."/>
            <person name="Damasio A.R."/>
            <person name="Diallinas G."/>
            <person name="Emri T."/>
            <person name="Fekete E."/>
            <person name="Flipphi M."/>
            <person name="Freyberg S."/>
            <person name="Gallo A."/>
            <person name="Gournas C."/>
            <person name="Habgood R."/>
            <person name="Hainaut M."/>
            <person name="Harispe M.L."/>
            <person name="Henrissat B."/>
            <person name="Hilden K.S."/>
            <person name="Hope R."/>
            <person name="Hossain A."/>
            <person name="Karabika E."/>
            <person name="Karaffa L."/>
            <person name="Karanyi Z."/>
            <person name="Krasevec N."/>
            <person name="Kuo A."/>
            <person name="Kusch H."/>
            <person name="LaButti K."/>
            <person name="Lagendijk E.L."/>
            <person name="Lapidus A."/>
            <person name="Levasseur A."/>
            <person name="Lindquist E."/>
            <person name="Lipzen A."/>
            <person name="Logrieco A.F."/>
            <person name="MacCabe A."/>
            <person name="Maekelae M.R."/>
            <person name="Malavazi I."/>
            <person name="Melin P."/>
            <person name="Meyer V."/>
            <person name="Mielnichuk N."/>
            <person name="Miskei M."/>
            <person name="Molnar A.P."/>
            <person name="Mule G."/>
            <person name="Ngan C.Y."/>
            <person name="Orejas M."/>
            <person name="Orosz E."/>
            <person name="Ouedraogo J.P."/>
            <person name="Overkamp K.M."/>
            <person name="Park H.-S."/>
            <person name="Perrone G."/>
            <person name="Piumi F."/>
            <person name="Punt P.J."/>
            <person name="Ram A.F."/>
            <person name="Ramon A."/>
            <person name="Rauscher S."/>
            <person name="Record E."/>
            <person name="Riano-Pachon D.M."/>
            <person name="Robert V."/>
            <person name="Roehrig J."/>
            <person name="Ruller R."/>
            <person name="Salamov A."/>
            <person name="Salih N.S."/>
            <person name="Samson R.A."/>
            <person name="Sandor E."/>
            <person name="Sanguinetti M."/>
            <person name="Schuetze T."/>
            <person name="Sepcic K."/>
            <person name="Shelest E."/>
            <person name="Sherlock G."/>
            <person name="Sophianopoulou V."/>
            <person name="Squina F.M."/>
            <person name="Sun H."/>
            <person name="Susca A."/>
            <person name="Todd R.B."/>
            <person name="Tsang A."/>
            <person name="Unkles S.E."/>
            <person name="van de Wiele N."/>
            <person name="van Rossen-Uffink D."/>
            <person name="Oliveira J.V."/>
            <person name="Vesth T.C."/>
            <person name="Visser J."/>
            <person name="Yu J.-H."/>
            <person name="Zhou M."/>
            <person name="Andersen M.R."/>
            <person name="Archer D.B."/>
            <person name="Baker S.E."/>
            <person name="Benoit I."/>
            <person name="Brakhage A.A."/>
            <person name="Braus G.H."/>
            <person name="Fischer R."/>
            <person name="Frisvad J.C."/>
            <person name="Goldman G.H."/>
            <person name="Houbraken J."/>
            <person name="Oakley B."/>
            <person name="Pocsi I."/>
            <person name="Scazzocchio C."/>
            <person name="Seiboth B."/>
            <person name="vanKuyk P.A."/>
            <person name="Wortman J."/>
            <person name="Dyer P.S."/>
            <person name="Grigoriev I.V."/>
        </authorList>
    </citation>
    <scope>NUCLEOTIDE SEQUENCE [LARGE SCALE GENOMIC DNA]</scope>
    <source>
        <strain>ATCC 16872 / CBS 172.66 / WB 5094</strain>
    </source>
</reference>
<reference key="2">
    <citation type="journal article" date="2020" name="Fungal Genet. Biol.">
        <title>Acurin A, a novel hybrid compound, biosynthesized by individually translated PKS- and NRPS-encoding genes in Aspergillus aculeatus.</title>
        <authorList>
            <person name="Wolff P.B."/>
            <person name="Nielsen M.L."/>
            <person name="Slot J.C."/>
            <person name="Andersen L.N."/>
            <person name="Petersen L.M."/>
            <person name="Isbrandt T."/>
            <person name="Holm D.K."/>
            <person name="Mortensen U.H."/>
            <person name="Noedvig C.S."/>
            <person name="Larsen T.O."/>
            <person name="Hoof J.B."/>
        </authorList>
    </citation>
    <scope>FUNCTION</scope>
    <scope>DOMAIN</scope>
    <scope>DISRUPTION PHENOTYPE</scope>
    <scope>PATHWAY</scope>
    <scope>INDUCTION</scope>
</reference>
<accession>A0A1L9WQM9</accession>
<protein>
    <recommendedName>
        <fullName evidence="6">Highly reducing polyketide synthase acrA</fullName>
        <ecNumber evidence="5">2.3.1.-</ecNumber>
    </recommendedName>
    <alternativeName>
        <fullName evidence="6">Acurin A biosynthesis cluster protein A</fullName>
    </alternativeName>
</protein>
<gene>
    <name evidence="6" type="primary">acrA</name>
    <name type="ORF">ASPACDRAFT_48</name>
</gene>
<comment type="function">
    <text evidence="5 7">Highly reducing polyketide synthase; part of the cluster that mediates the biosynthesis of acurin A, a highly reduced polyketide coupled to a serine via a peptide bond (PubMed:32234543). The activities of the highly reducing polyketide synthase acrA and the nonribosomal peptide synthetase acrB are collectively responsible for the synthesis of the acurin A core structure with a heptaketide backbone produced by acrA covalently fused to a L-serine by acrB (PubMed:32234543). After the formation of the PK-NRP hybrid product, it is detached from acrB by reductive release to set up the formation of the lactam ring by aldol condensation (Probable). The hydrolyase acrC then catalyzes water loss to generate a double bond in the ring (Probable). This double bond is probably reduced, which is followed by three oxidations at C-22 to generate the carboxylic acid moiety, involving probably the FAD-binding monooxygenase acrE and the cytochrome P450 monooxygenases acrD and acrF (Probable). Finally, a last methylation step performed by the O-methyltransferase acrG leads to the production of acurin A (Probable).</text>
</comment>
<comment type="pathway">
    <text evidence="5">Secondary metabolite biosynthesis.</text>
</comment>
<comment type="induction">
    <text evidence="5">Expression is positively regulated by the acurin A cluster-specific transcription regulator acrR.</text>
</comment>
<comment type="domain">
    <text evidence="7">Multidomain protein; including a ketosynthase (KS) that catalyzes repeated decarboxylative condensation to elongate the polyketide backbone; a malonyl-CoA:ACP transacylase (MAT) that selects and transfers the extender unit malonyl-CoA; a dehydratase (DH) domain that reduces hydroxyl groups to enoyl groups; a methyltransferase (MT) domain responsible for the incorporation of methyl groups; a ketoreductase (KR) domain that catalyzes beta-ketoreduction steps; and an acyl-carrier protein (ACP) that serves as the tether of the growing and completed polyketide via its phosphopantetheinyl arm.</text>
</comment>
<comment type="disruption phenotype">
    <text evidence="5">Abolishes the production of acurin A.</text>
</comment>
<keyword id="KW-0489">Methyltransferase</keyword>
<keyword id="KW-0511">Multifunctional enzyme</keyword>
<keyword id="KW-0560">Oxidoreductase</keyword>
<keyword id="KW-0596">Phosphopantetheine</keyword>
<keyword id="KW-0597">Phosphoprotein</keyword>
<keyword id="KW-1185">Reference proteome</keyword>
<keyword id="KW-0808">Transferase</keyword>
<sequence>TGTPEPIAIVGMGCRFPGGANTPSKLWDLLCAKRDVQRRIPTDRFHVDAFYDRDGERAGCLNVREAYTLDEDIRQFDAAFFKTNALEAEAMDPQQRLLLETVYEALESAGGVMEDLHGSDTAVYVGVMTGDYHELLLRDPEDMPKYMATGTARSILSNRISYFFDWTGPSMTIDTACSSSLVAVHEAVQALRQGRSTLACAAGANLILGPEMMISESKLHMLSPTGRSRMWDAGADGYARGEGFAAVMLKTLSQAVADGDYVYGVIRETGVNSDGRTNGITLPGADSQTALIRQTYARAGLDIDSQRCQYFEAHGTGTAAGDPIEARAIYNAFFASSSEQAETPLYVGSVKTAVGHLEGTAGLAGLVKAVEAVRRGVIPPNMLFESLNPEIQPFYHRLAVPTDTIPWPEVREGEPRRASVNSFGFGGTNAHAIIESYDNPHRRPSSATSSLYTPLVLSANSESSLRGQVEALHAFLSTTDTPVQHILHTLQTRRSQHPVRATFSAPDRDTLSTALSKAVASDSTLGTRVDKRPAKPRILAVFTGQGAQWPTMGREILRASPLAQRTLSTLQSALDTLPDGPDWLLSTEILADKDTSRLASASVAQPLCTAVQILVVDLLRLAGITPSVVVGHSSGEIAAAYAAGMISAAEAIRIAYYRGVHASLARGQNGQRGGMMAVGMSYDEATEFCEENFAERIEVAASNAPSSVTLSGDEDAIAEAKAILDERGVFARPLRVDTAYHSAHMIPCSEPYLDSLAACEIAPQEAREGCVWVSSVHGARMEGYRVDTLTGEYWNDNMVSPVMFSTAVEMALSEEAACDVAIEIGAHPALKGPFTQTAKQVAAAASSATPLPYSGTLSRGQHDIEALSETLGYLWLHLGAKAVAFPAYTSAFTDALPQWVPDLPRYSWDHRQSFWRESTKSANFRSRLPRHPLLGVRSTEDLDQEMRWAITLRTQELPWLEGHKVEGQVIYPAAAYLVMAMEAAHNLVGEGLSVQMLELFDVEIANAIPLPEDGKGVEVQFTLVPSPGNAKSETKTAQWACYARTAGTGKSSWRSNARGTVRVVLGPAADEDLPPRNPPTGVFHEVKTERFYEALTAIGLHYTGPFRGLDSVHRRSGTAMATATQIPAAELGVPIHPAVLDAAFQTLFAAYCWPEDGSLRAPFVPTGLQSLRIVNRDLVQASAQLTVDAAITHSSGTTIIADLDLYSPAAAGLIQLQGLRCSSLTPPGPRDYKELYTQTAWEVDLSSGLAALSSVSDSDSPSNLALVDLSERLAYYYLRHLNTTIPRSAVPQMEWHHQRIFEWIDHLFPLVTSGKHPTIRPEWSTDTKPHLLALASQYPDSVDLQLIRAVGEHLPAVVRGEAWMLEHMVANDTLDRFYKFGLGFARANGYMGRVAGQIAHRYPRSRILEIGAGTGGATKGILEALDGRFERYTFTDISTGFFEAAATQFERWAGKMSYRALDVEKELSSQGWDGEEAGFDVIVASNVLHATKSLRKTMENVRRLLKPGGFLLLLEVTSEIVRVKLMMAGLPGWWLGGEDGRRYGPTITVEQWDTLLKETGFAGVDHVVNDFVDESKYMTSVMVTQAVDADVRLLREPLSAGWTLPPVTVVGGQKGLAGRVVEALGSAGSVQLVENLEGLFVQPDISVTSLVILEDFDHPVLEDFTPCKLEALQRALPECRQLLWVSGQCREKNPYGNMAIGLCRAIAAEQPHIQFQHLDIEDAVDAGAAKAVTEALVRLVFASQTRLATKNVLWTCEPELVRENGQWLVPRIVPDKRLNDQLNARKMVVQGMATSEEKLELVKQAERYVLSPALPSVVEKDGAVEVKVTHALVNAVQLDQGSVCVVSGNLLSKPDVQVIACTNSVRSVVTVSEEMVFPAENASPPLLQTVAFGLVADEWLHGLSSSDVLVLHQADEQLGRVLRSKAAEAGVKVVDVRTHAYASERSIRAQIPPSTKLLVDFAQSSVQWERILPAQCKIRSYGDAIAPGTSIADTANLNTSQLQRAISWAQQQQPADTALETIPAAELATTPTPSYHAILSFSPSTTIPTITRPVNPALLFRPDRTYLLVGCTGGLGQSLCRWMVLNGARHLALTTRNRTRISTTWLADLAQLGANVQLFEADVADMASLTAIHQTITTGMPPIAGIANAAMVLSDRSFGELKHTDFTTVFGPKVLGTKNLDTLFHSQKLDFFIMFSSLASIVGNRGQSNYVAANLFMSTVAAQRRARGLAASVFHIGMVLGVGYVSTTGVYETTLRQYKYMPIAEPEFWDMFAQAIVIGHPTLAGGHAPEMITGLHRHSLREEVAKAFWAENPRFSLHTLVEESQTVVVDAASAKQVPLAEAVAEAETLEEVDGVIQEAFVVKMERMLQAAKGSIERGQPLINLGVDSLIAVEIRSWFLKELEVDMPVLKLVGGMSVGELCREAASEVL</sequence>
<feature type="chain" id="PRO_0000450413" description="Highly reducing polyketide synthase acrA">
    <location>
        <begin position="1"/>
        <end position="2429"/>
    </location>
</feature>
<feature type="domain" description="Ketosynthase family 3 (KS3)" evidence="3 7">
    <location>
        <begin position="4"/>
        <end position="436"/>
    </location>
</feature>
<feature type="domain" description="PKS/mFAS DH" evidence="4">
    <location>
        <begin position="931"/>
        <end position="1230"/>
    </location>
</feature>
<feature type="domain" description="Carrier" evidence="2 7">
    <location>
        <begin position="2351"/>
        <end position="2428"/>
    </location>
</feature>
<feature type="region of interest" description="Malonyl-CoA:ACP transacylase (MAT) domain" evidence="1 7">
    <location>
        <begin position="541"/>
        <end position="861"/>
    </location>
</feature>
<feature type="region of interest" description="Dehydratase (DH) domain" evidence="1 7">
    <location>
        <begin position="931"/>
        <end position="1229"/>
    </location>
</feature>
<feature type="region of interest" description="N-terminal hotdog fold" evidence="4">
    <location>
        <begin position="931"/>
        <end position="1068"/>
    </location>
</feature>
<feature type="region of interest" description="C-terminal hotdog fold" evidence="4">
    <location>
        <begin position="1082"/>
        <end position="1230"/>
    </location>
</feature>
<feature type="region of interest" description="Methyltransferase (MT) domain" evidence="1 7">
    <location>
        <begin position="1388"/>
        <end position="1577"/>
    </location>
</feature>
<feature type="region of interest" description="Ketoreductase (KR) domain" evidence="1 7">
    <location>
        <begin position="2065"/>
        <end position="2235"/>
    </location>
</feature>
<feature type="active site" description="For beta-ketoacyl synthase activity" evidence="3">
    <location>
        <position position="177"/>
    </location>
</feature>
<feature type="active site" description="For beta-ketoacyl synthase activity" evidence="3">
    <location>
        <position position="314"/>
    </location>
</feature>
<feature type="active site" description="For beta-ketoacyl synthase activity" evidence="3">
    <location>
        <position position="356"/>
    </location>
</feature>
<feature type="active site" description="Proton acceptor; for dehydratase activity" evidence="4">
    <location>
        <position position="963"/>
    </location>
</feature>
<feature type="active site" description="Proton donor; for dehydratase activity" evidence="4">
    <location>
        <position position="1141"/>
    </location>
</feature>
<feature type="modified residue" description="O-(pantetheine 4'-phosphoryl)serine" evidence="2">
    <location>
        <position position="2388"/>
    </location>
</feature>